<reference key="1">
    <citation type="journal article" date="2006" name="J. Bacteriol.">
        <title>The Methanosarcina barkeri genome: comparative analysis with Methanosarcina acetivorans and Methanosarcina mazei reveals extensive rearrangement within methanosarcinal genomes.</title>
        <authorList>
            <person name="Maeder D.L."/>
            <person name="Anderson I."/>
            <person name="Brettin T.S."/>
            <person name="Bruce D.C."/>
            <person name="Gilna P."/>
            <person name="Han C.S."/>
            <person name="Lapidus A."/>
            <person name="Metcalf W.W."/>
            <person name="Saunders E."/>
            <person name="Tapia R."/>
            <person name="Sowers K.R."/>
        </authorList>
    </citation>
    <scope>NUCLEOTIDE SEQUENCE [LARGE SCALE GENOMIC DNA]</scope>
    <source>
        <strain>Fusaro / DSM 804</strain>
    </source>
</reference>
<name>THIC2_METBF</name>
<accession>Q46AN2</accession>
<proteinExistence type="inferred from homology"/>
<evidence type="ECO:0000255" key="1">
    <source>
        <dbReference type="HAMAP-Rule" id="MF_00089"/>
    </source>
</evidence>
<keyword id="KW-0004">4Fe-4S</keyword>
<keyword id="KW-0408">Iron</keyword>
<keyword id="KW-0411">Iron-sulfur</keyword>
<keyword id="KW-0456">Lyase</keyword>
<keyword id="KW-0479">Metal-binding</keyword>
<keyword id="KW-0949">S-adenosyl-L-methionine</keyword>
<keyword id="KW-0784">Thiamine biosynthesis</keyword>
<keyword id="KW-0862">Zinc</keyword>
<organism>
    <name type="scientific">Methanosarcina barkeri (strain Fusaro / DSM 804)</name>
    <dbReference type="NCBI Taxonomy" id="269797"/>
    <lineage>
        <taxon>Archaea</taxon>
        <taxon>Methanobacteriati</taxon>
        <taxon>Methanobacteriota</taxon>
        <taxon>Stenosarchaea group</taxon>
        <taxon>Methanomicrobia</taxon>
        <taxon>Methanosarcinales</taxon>
        <taxon>Methanosarcinaceae</taxon>
        <taxon>Methanosarcina</taxon>
    </lineage>
</organism>
<protein>
    <recommendedName>
        <fullName evidence="1">Phosphomethylpyrimidine synthase 2</fullName>
        <ecNumber evidence="1">4.1.99.17</ecNumber>
    </recommendedName>
    <alternativeName>
        <fullName evidence="1">Hydroxymethylpyrimidine phosphate synthase 2</fullName>
        <shortName evidence="1">HMP-P synthase 2</shortName>
        <shortName evidence="1">HMP-phosphate synthase 2</shortName>
        <shortName evidence="1">HMPP synthase 2</shortName>
    </alternativeName>
    <alternativeName>
        <fullName evidence="1">Thiamine biosynthesis protein ThiC 2</fullName>
    </alternativeName>
</protein>
<gene>
    <name evidence="1" type="primary">thiC2</name>
    <name type="ordered locus">Mbar_A2129</name>
</gene>
<sequence>MTLMEDAKKGIVTPSIETVAKTEGIDPETVCSCVAKGLIAIPVNNRRETLPIGIGKYMSTKINANVGTSRDYVDIDAEIKKAKAAEAFGAHAVMDLSTGGNLDEIRTRILKSVNIPVGTVPIYQAAASRKVVVEMTSDDMFNAVRKHAEQGVDFVTVHAGVNLNSLERLRQSDRIMNVVSRGGSFTLAWMLHNGEDNPFYAEFDYLLEIAKEYDMTLSLGDGMRPGCIADASDRPKFMEFITLGELVKRARAANVQTFVEGPGHVPLNEIELSVRGMKELCNGAPLYLLGPLVTDIAPGFDHITGAIGGAVAGMHGTDFLCMVTPSEHLALPTLEDIKEGLLVTKVAAHTIDLIKEGPRERAWEKDLAMAYARRDLDWEKQFELAIDGNRARKIRDARKTESDTCSMCGELCALKIVKEAFEKKNSEE</sequence>
<feature type="chain" id="PRO_0000242325" description="Phosphomethylpyrimidine synthase 2">
    <location>
        <begin position="1"/>
        <end position="428"/>
    </location>
</feature>
<feature type="binding site" evidence="1">
    <location>
        <position position="65"/>
    </location>
    <ligand>
        <name>substrate</name>
    </ligand>
</feature>
<feature type="binding site" evidence="1">
    <location>
        <position position="94"/>
    </location>
    <ligand>
        <name>substrate</name>
    </ligand>
</feature>
<feature type="binding site" evidence="1">
    <location>
        <position position="123"/>
    </location>
    <ligand>
        <name>substrate</name>
    </ligand>
</feature>
<feature type="binding site" evidence="1">
    <location>
        <position position="158"/>
    </location>
    <ligand>
        <name>substrate</name>
    </ligand>
</feature>
<feature type="binding site" evidence="1">
    <location>
        <begin position="180"/>
        <end position="182"/>
    </location>
    <ligand>
        <name>substrate</name>
    </ligand>
</feature>
<feature type="binding site" evidence="1">
    <location>
        <begin position="221"/>
        <end position="224"/>
    </location>
    <ligand>
        <name>substrate</name>
    </ligand>
</feature>
<feature type="binding site" evidence="1">
    <location>
        <position position="260"/>
    </location>
    <ligand>
        <name>substrate</name>
    </ligand>
</feature>
<feature type="binding site" evidence="1">
    <location>
        <position position="264"/>
    </location>
    <ligand>
        <name>Zn(2+)</name>
        <dbReference type="ChEBI" id="CHEBI:29105"/>
    </ligand>
</feature>
<feature type="binding site" evidence="1">
    <location>
        <position position="287"/>
    </location>
    <ligand>
        <name>substrate</name>
    </ligand>
</feature>
<feature type="binding site" evidence="1">
    <location>
        <position position="328"/>
    </location>
    <ligand>
        <name>Zn(2+)</name>
        <dbReference type="ChEBI" id="CHEBI:29105"/>
    </ligand>
</feature>
<feature type="binding site" evidence="1">
    <location>
        <position position="405"/>
    </location>
    <ligand>
        <name>[4Fe-4S] cluster</name>
        <dbReference type="ChEBI" id="CHEBI:49883"/>
        <note>4Fe-4S-S-AdoMet</note>
    </ligand>
</feature>
<feature type="binding site" evidence="1">
    <location>
        <position position="408"/>
    </location>
    <ligand>
        <name>[4Fe-4S] cluster</name>
        <dbReference type="ChEBI" id="CHEBI:49883"/>
        <note>4Fe-4S-S-AdoMet</note>
    </ligand>
</feature>
<feature type="binding site" evidence="1">
    <location>
        <position position="412"/>
    </location>
    <ligand>
        <name>[4Fe-4S] cluster</name>
        <dbReference type="ChEBI" id="CHEBI:49883"/>
        <note>4Fe-4S-S-AdoMet</note>
    </ligand>
</feature>
<dbReference type="EC" id="4.1.99.17" evidence="1"/>
<dbReference type="EMBL" id="CP000099">
    <property type="protein sequence ID" value="AAZ71060.1"/>
    <property type="molecule type" value="Genomic_DNA"/>
</dbReference>
<dbReference type="SMR" id="Q46AN2"/>
<dbReference type="STRING" id="269797.Mbar_A2129"/>
<dbReference type="PaxDb" id="269797-Mbar_A2129"/>
<dbReference type="KEGG" id="mba:Mbar_A2129"/>
<dbReference type="eggNOG" id="arCOG02741">
    <property type="taxonomic scope" value="Archaea"/>
</dbReference>
<dbReference type="HOGENOM" id="CLU_013181_2_2_2"/>
<dbReference type="OrthoDB" id="335406at2157"/>
<dbReference type="UniPathway" id="UPA00060"/>
<dbReference type="GO" id="GO:0051539">
    <property type="term" value="F:4 iron, 4 sulfur cluster binding"/>
    <property type="evidence" value="ECO:0007669"/>
    <property type="project" value="UniProtKB-KW"/>
</dbReference>
<dbReference type="GO" id="GO:0016830">
    <property type="term" value="F:carbon-carbon lyase activity"/>
    <property type="evidence" value="ECO:0007669"/>
    <property type="project" value="InterPro"/>
</dbReference>
<dbReference type="GO" id="GO:0008270">
    <property type="term" value="F:zinc ion binding"/>
    <property type="evidence" value="ECO:0007669"/>
    <property type="project" value="UniProtKB-UniRule"/>
</dbReference>
<dbReference type="GO" id="GO:0009228">
    <property type="term" value="P:thiamine biosynthetic process"/>
    <property type="evidence" value="ECO:0007669"/>
    <property type="project" value="UniProtKB-KW"/>
</dbReference>
<dbReference type="GO" id="GO:0009229">
    <property type="term" value="P:thiamine diphosphate biosynthetic process"/>
    <property type="evidence" value="ECO:0007669"/>
    <property type="project" value="UniProtKB-UniRule"/>
</dbReference>
<dbReference type="FunFam" id="3.20.20.540:FF:000001">
    <property type="entry name" value="Phosphomethylpyrimidine synthase"/>
    <property type="match status" value="1"/>
</dbReference>
<dbReference type="Gene3D" id="6.10.250.620">
    <property type="match status" value="1"/>
</dbReference>
<dbReference type="Gene3D" id="3.20.20.540">
    <property type="entry name" value="Radical SAM ThiC family, central domain"/>
    <property type="match status" value="1"/>
</dbReference>
<dbReference type="HAMAP" id="MF_00089">
    <property type="entry name" value="ThiC"/>
    <property type="match status" value="1"/>
</dbReference>
<dbReference type="InterPro" id="IPR037509">
    <property type="entry name" value="ThiC"/>
</dbReference>
<dbReference type="InterPro" id="IPR038521">
    <property type="entry name" value="ThiC/Bza_core_dom"/>
</dbReference>
<dbReference type="InterPro" id="IPR002817">
    <property type="entry name" value="ThiC/BzaA/B"/>
</dbReference>
<dbReference type="NCBIfam" id="NF009895">
    <property type="entry name" value="PRK13352.1"/>
    <property type="match status" value="1"/>
</dbReference>
<dbReference type="NCBIfam" id="TIGR00190">
    <property type="entry name" value="thiC"/>
    <property type="match status" value="1"/>
</dbReference>
<dbReference type="PANTHER" id="PTHR30557:SF1">
    <property type="entry name" value="PHOSPHOMETHYLPYRIMIDINE SYNTHASE, CHLOROPLASTIC"/>
    <property type="match status" value="1"/>
</dbReference>
<dbReference type="PANTHER" id="PTHR30557">
    <property type="entry name" value="THIAMINE BIOSYNTHESIS PROTEIN THIC"/>
    <property type="match status" value="1"/>
</dbReference>
<dbReference type="Pfam" id="PF01964">
    <property type="entry name" value="ThiC_Rad_SAM"/>
    <property type="match status" value="1"/>
</dbReference>
<dbReference type="SFLD" id="SFLDF00407">
    <property type="entry name" value="phosphomethylpyrimidine_syntha"/>
    <property type="match status" value="1"/>
</dbReference>
<dbReference type="SFLD" id="SFLDG01114">
    <property type="entry name" value="phosphomethylpyrimidine_syntha"/>
    <property type="match status" value="1"/>
</dbReference>
<dbReference type="SFLD" id="SFLDS00113">
    <property type="entry name" value="Radical_SAM_Phosphomethylpyrim"/>
    <property type="match status" value="1"/>
</dbReference>
<comment type="function">
    <text evidence="1">Catalyzes the synthesis of the hydroxymethylpyrimidine phosphate (HMP-P) moiety of thiamine from aminoimidazole ribotide (AIR) in a radical S-adenosyl-L-methionine (SAM)-dependent reaction.</text>
</comment>
<comment type="catalytic activity">
    <reaction evidence="1">
        <text>5-amino-1-(5-phospho-beta-D-ribosyl)imidazole + S-adenosyl-L-methionine = 4-amino-2-methyl-5-(phosphooxymethyl)pyrimidine + CO + 5'-deoxyadenosine + formate + L-methionine + 3 H(+)</text>
        <dbReference type="Rhea" id="RHEA:24840"/>
        <dbReference type="ChEBI" id="CHEBI:15378"/>
        <dbReference type="ChEBI" id="CHEBI:15740"/>
        <dbReference type="ChEBI" id="CHEBI:17245"/>
        <dbReference type="ChEBI" id="CHEBI:17319"/>
        <dbReference type="ChEBI" id="CHEBI:57844"/>
        <dbReference type="ChEBI" id="CHEBI:58354"/>
        <dbReference type="ChEBI" id="CHEBI:59789"/>
        <dbReference type="ChEBI" id="CHEBI:137981"/>
        <dbReference type="EC" id="4.1.99.17"/>
    </reaction>
</comment>
<comment type="cofactor">
    <cofactor evidence="1">
        <name>[4Fe-4S] cluster</name>
        <dbReference type="ChEBI" id="CHEBI:49883"/>
    </cofactor>
    <text evidence="1">Binds 1 [4Fe-4S] cluster per subunit. The cluster is coordinated with 3 cysteines and an exchangeable S-adenosyl-L-methionine.</text>
</comment>
<comment type="pathway">
    <text evidence="1">Cofactor biosynthesis; thiamine diphosphate biosynthesis.</text>
</comment>
<comment type="similarity">
    <text evidence="1">Belongs to the ThiC family.</text>
</comment>